<accession>D2Q4G5</accession>
<comment type="function">
    <text evidence="1">ATPase which is responsible for recognizing, binding, unfolding and translocation of pupylated proteins into the bacterial 20S proteasome core particle. May be essential for opening the gate of the 20S proteasome via an interaction with its C-terminus, thereby allowing substrate entry and access to the site of proteolysis. Thus, the C-termini of the proteasomal ATPase may function like a 'key in a lock' to induce gate opening and therefore regulate proteolysis.</text>
</comment>
<comment type="pathway">
    <text evidence="1">Protein degradation; proteasomal Pup-dependent pathway.</text>
</comment>
<comment type="subunit">
    <text evidence="1">Homohexamer. Assembles into a hexameric ring structure that caps the 20S proteasome core. Strongly interacts with the prokaryotic ubiquitin-like protein Pup through a hydrophobic interface; the interacting region of ARC lies in its N-terminal coiled-coil domain. There is one Pup binding site per ARC hexamer ring. Upon ATP-binding, the C-terminus of ARC interacts with the alpha-rings of the proteasome core, possibly by binding to the intersubunit pockets.</text>
</comment>
<comment type="domain">
    <text evidence="1">Consists of three main regions, an N-terminal coiled-coil domain that binds to protein Pup and functions as a docking station, an interdomain involved in ARC hexamerization, and a C-terminal ATPase domain of the AAA type.</text>
</comment>
<comment type="similarity">
    <text evidence="1">Belongs to the AAA ATPase family.</text>
</comment>
<proteinExistence type="inferred from homology"/>
<name>ARC_KRIFD</name>
<feature type="chain" id="PRO_0000396990" description="Proteasome-associated ATPase">
    <location>
        <begin position="1"/>
        <end position="578"/>
    </location>
</feature>
<feature type="region of interest" description="Docks into pockets in the proteasome alpha-ring" evidence="1">
    <location>
        <begin position="577"/>
        <end position="578"/>
    </location>
</feature>
<feature type="coiled-coil region" evidence="1">
    <location>
        <begin position="8"/>
        <end position="84"/>
    </location>
</feature>
<feature type="binding site" evidence="1">
    <location>
        <begin position="267"/>
        <end position="272"/>
    </location>
    <ligand>
        <name>ATP</name>
        <dbReference type="ChEBI" id="CHEBI:30616"/>
    </ligand>
</feature>
<reference key="1">
    <citation type="submission" date="2009-09" db="EMBL/GenBank/DDBJ databases">
        <title>The complete genome of Kribbella flavida DSM 17836.</title>
        <authorList>
            <consortium name="US DOE Joint Genome Institute (JGI-PGF)"/>
            <person name="Lucas S."/>
            <person name="Copeland A."/>
            <person name="Lapidus A."/>
            <person name="Glavina del Rio T."/>
            <person name="Dalin E."/>
            <person name="Tice H."/>
            <person name="Bruce D."/>
            <person name="Goodwin L."/>
            <person name="Pitluck S."/>
            <person name="Kyrpides N."/>
            <person name="Mavromatis K."/>
            <person name="Ivanova N."/>
            <person name="Saunders E."/>
            <person name="Brettin T."/>
            <person name="Detter J.C."/>
            <person name="Han C."/>
            <person name="Larimer F."/>
            <person name="Land M."/>
            <person name="Hauser L."/>
            <person name="Markowitz V."/>
            <person name="Cheng J.-F."/>
            <person name="Hugenholtz P."/>
            <person name="Woyke T."/>
            <person name="Wu D."/>
            <person name="Pukall R."/>
            <person name="Klenk H.-P."/>
            <person name="Eisen J.A."/>
        </authorList>
    </citation>
    <scope>NUCLEOTIDE SEQUENCE [LARGE SCALE GENOMIC DNA]</scope>
    <source>
        <strain>DSM 17836 / JCM 10339 / NBRC 14399</strain>
    </source>
</reference>
<dbReference type="EMBL" id="CP001736">
    <property type="protein sequence ID" value="ADB32279.1"/>
    <property type="molecule type" value="Genomic_DNA"/>
</dbReference>
<dbReference type="SMR" id="D2Q4G5"/>
<dbReference type="STRING" id="479435.Kfla_3217"/>
<dbReference type="KEGG" id="kfl:Kfla_3217"/>
<dbReference type="eggNOG" id="COG1222">
    <property type="taxonomic scope" value="Bacteria"/>
</dbReference>
<dbReference type="HOGENOM" id="CLU_036054_0_0_11"/>
<dbReference type="UniPathway" id="UPA00997"/>
<dbReference type="Proteomes" id="UP000007967">
    <property type="component" value="Chromosome"/>
</dbReference>
<dbReference type="GO" id="GO:0000502">
    <property type="term" value="C:proteasome complex"/>
    <property type="evidence" value="ECO:0007669"/>
    <property type="project" value="UniProtKB-KW"/>
</dbReference>
<dbReference type="GO" id="GO:0005524">
    <property type="term" value="F:ATP binding"/>
    <property type="evidence" value="ECO:0007669"/>
    <property type="project" value="UniProtKB-UniRule"/>
</dbReference>
<dbReference type="GO" id="GO:0016887">
    <property type="term" value="F:ATP hydrolysis activity"/>
    <property type="evidence" value="ECO:0007669"/>
    <property type="project" value="UniProtKB-UniRule"/>
</dbReference>
<dbReference type="GO" id="GO:0019941">
    <property type="term" value="P:modification-dependent protein catabolic process"/>
    <property type="evidence" value="ECO:0007669"/>
    <property type="project" value="InterPro"/>
</dbReference>
<dbReference type="GO" id="GO:0010498">
    <property type="term" value="P:proteasomal protein catabolic process"/>
    <property type="evidence" value="ECO:0007669"/>
    <property type="project" value="InterPro"/>
</dbReference>
<dbReference type="FunFam" id="3.40.50.300:FF:000155">
    <property type="entry name" value="AAA ATPase forming ring-shaped complexes"/>
    <property type="match status" value="1"/>
</dbReference>
<dbReference type="Gene3D" id="1.10.8.60">
    <property type="match status" value="1"/>
</dbReference>
<dbReference type="Gene3D" id="1.20.5.170">
    <property type="match status" value="1"/>
</dbReference>
<dbReference type="Gene3D" id="2.40.50.140">
    <property type="entry name" value="Nucleic acid-binding proteins"/>
    <property type="match status" value="2"/>
</dbReference>
<dbReference type="Gene3D" id="3.40.50.300">
    <property type="entry name" value="P-loop containing nucleotide triphosphate hydrolases"/>
    <property type="match status" value="1"/>
</dbReference>
<dbReference type="HAMAP" id="MF_02112">
    <property type="entry name" value="ARC_ATPase"/>
    <property type="match status" value="1"/>
</dbReference>
<dbReference type="InterPro" id="IPR003593">
    <property type="entry name" value="AAA+_ATPase"/>
</dbReference>
<dbReference type="InterPro" id="IPR050168">
    <property type="entry name" value="AAA_ATPase_domain"/>
</dbReference>
<dbReference type="InterPro" id="IPR003959">
    <property type="entry name" value="ATPase_AAA_core"/>
</dbReference>
<dbReference type="InterPro" id="IPR003960">
    <property type="entry name" value="ATPase_AAA_CS"/>
</dbReference>
<dbReference type="InterPro" id="IPR012340">
    <property type="entry name" value="NA-bd_OB-fold"/>
</dbReference>
<dbReference type="InterPro" id="IPR027417">
    <property type="entry name" value="P-loop_NTPase"/>
</dbReference>
<dbReference type="InterPro" id="IPR032501">
    <property type="entry name" value="Prot_ATP_ID_OB_2nd"/>
</dbReference>
<dbReference type="InterPro" id="IPR041626">
    <property type="entry name" value="Prot_ATP_ID_OB_N"/>
</dbReference>
<dbReference type="InterPro" id="IPR022482">
    <property type="entry name" value="Proteasome_ATPase"/>
</dbReference>
<dbReference type="NCBIfam" id="TIGR03689">
    <property type="entry name" value="pup_AAA"/>
    <property type="match status" value="1"/>
</dbReference>
<dbReference type="PANTHER" id="PTHR23077">
    <property type="entry name" value="AAA-FAMILY ATPASE"/>
    <property type="match status" value="1"/>
</dbReference>
<dbReference type="PANTHER" id="PTHR23077:SF144">
    <property type="entry name" value="PROTEASOME-ASSOCIATED ATPASE"/>
    <property type="match status" value="1"/>
</dbReference>
<dbReference type="Pfam" id="PF00004">
    <property type="entry name" value="AAA"/>
    <property type="match status" value="1"/>
</dbReference>
<dbReference type="Pfam" id="PF16450">
    <property type="entry name" value="Prot_ATP_ID_OB_C"/>
    <property type="match status" value="1"/>
</dbReference>
<dbReference type="Pfam" id="PF17758">
    <property type="entry name" value="Prot_ATP_ID_OB_N"/>
    <property type="match status" value="1"/>
</dbReference>
<dbReference type="SMART" id="SM00382">
    <property type="entry name" value="AAA"/>
    <property type="match status" value="1"/>
</dbReference>
<dbReference type="SUPFAM" id="SSF52540">
    <property type="entry name" value="P-loop containing nucleoside triphosphate hydrolases"/>
    <property type="match status" value="1"/>
</dbReference>
<dbReference type="PROSITE" id="PS00674">
    <property type="entry name" value="AAA"/>
    <property type="match status" value="1"/>
</dbReference>
<evidence type="ECO:0000255" key="1">
    <source>
        <dbReference type="HAMAP-Rule" id="MF_02112"/>
    </source>
</evidence>
<protein>
    <recommendedName>
        <fullName evidence="1">Proteasome-associated ATPase</fullName>
    </recommendedName>
    <alternativeName>
        <fullName evidence="1">AAA ATPase forming ring-shaped complexes</fullName>
        <shortName evidence="1">ARC</shortName>
    </alternativeName>
    <alternativeName>
        <fullName evidence="1">Proteasomal ATPase</fullName>
    </alternativeName>
</protein>
<organism>
    <name type="scientific">Kribbella flavida (strain DSM 17836 / JCM 10339 / NBRC 14399)</name>
    <dbReference type="NCBI Taxonomy" id="479435"/>
    <lineage>
        <taxon>Bacteria</taxon>
        <taxon>Bacillati</taxon>
        <taxon>Actinomycetota</taxon>
        <taxon>Actinomycetes</taxon>
        <taxon>Propionibacteriales</taxon>
        <taxon>Kribbellaceae</taxon>
        <taxon>Kribbella</taxon>
    </lineage>
</organism>
<keyword id="KW-0067">ATP-binding</keyword>
<keyword id="KW-0143">Chaperone</keyword>
<keyword id="KW-0175">Coiled coil</keyword>
<keyword id="KW-0547">Nucleotide-binding</keyword>
<keyword id="KW-0647">Proteasome</keyword>
<keyword id="KW-1185">Reference proteome</keyword>
<gene>
    <name evidence="1" type="primary">arc</name>
    <name type="ordered locus">Kfla_3217</name>
</gene>
<sequence length="578" mass="64287">MAGDESPTAAELRNQVRYLEAEVAALRRRLLEHPADGRSLESRLSETQASLASVTAQNERLAETLREAREKIIALKEEVDRLAQPPSGFGTFLGRNDDDTLDVFTGGRKLRVAASPSVDLDALKLGQELMLNEALNVVEACDFEVVGDVVMLKELLADGERALVIAQADEERVVRLASPLLDQALRAGDSLLLEPRSGYVYEKIPKSEVEELVLEEVPDIDYTQIGGLFGQIEQIRDAVEMPYLHKDLFLEHELKPPKGVLLYGPPGCGKTLIAKAVANSLAKKVAEKTGVEGRSFFLNIKGPELLNKYVGETERHIRLVFQRAREKASEGMPVIVFFDEMDSLFRTRGSGVSSDVENTIVPQLLSEIDGVEGLENVIVIGASNREDMIDPAILRPGRLDVKIKIERPDAEAARDIFSKYLTTTLPLHADDVNEFGGDRRECVNGMIQRTVERMYTEADENRFLEVTYANGDKEVLYFKDFNSGAMIQNIVDRAKKMAIKAFLDDNQKGLRVQHLLQACVDEFKENEDLPNTTNPDDWARISGKKGERIVYIRTLISGKQGTEPGRSIDTATNTGQYL</sequence>